<proteinExistence type="evidence at protein level"/>
<evidence type="ECO:0000250" key="1"/>
<evidence type="ECO:0000250" key="2">
    <source>
        <dbReference type="UniProtKB" id="Q6Q972"/>
    </source>
</evidence>
<evidence type="ECO:0000255" key="3"/>
<evidence type="ECO:0000256" key="4">
    <source>
        <dbReference type="SAM" id="MobiDB-lite"/>
    </source>
</evidence>
<evidence type="ECO:0000305" key="5"/>
<comment type="function">
    <text evidence="2">The antenna complex functions as a light receptor, it captures and delivers excitation energy to photosystems II and I. The Prochlorales pcb genes are not related to higher plant LHCs.</text>
</comment>
<comment type="cofactor">
    <cofactor evidence="2">
        <name>chlorophyll a</name>
        <dbReference type="ChEBI" id="CHEBI:58416"/>
    </cofactor>
    <text evidence="2">Chlorophyll a.</text>
</comment>
<comment type="cofactor">
    <cofactor evidence="2">
        <name>chlorophyll b</name>
        <dbReference type="ChEBI" id="CHEBI:61721"/>
    </cofactor>
    <text evidence="2">Chlorophyll b.</text>
</comment>
<comment type="subunit">
    <text evidence="2">The antenna complex consists of chlorophylls (a and b) and chlorophyll a/b binding proteins.</text>
</comment>
<comment type="subcellular location">
    <subcellularLocation>
        <location evidence="2">Cellular thylakoid membrane</location>
        <topology evidence="1">Multi-pass membrane protein</topology>
    </subcellularLocation>
</comment>
<comment type="similarity">
    <text evidence="5">Belongs to the PsbB/PsbC family. IsiA/Pcb subfamily.</text>
</comment>
<feature type="chain" id="PRO_0000077537" description="Chlorophyll a/b light-harvesting protein PcbC">
    <location>
        <begin position="1"/>
        <end position="375"/>
    </location>
</feature>
<feature type="transmembrane region" description="Helical" evidence="3">
    <location>
        <begin position="40"/>
        <end position="60"/>
    </location>
</feature>
<feature type="transmembrane region" description="Helical" evidence="3">
    <location>
        <begin position="102"/>
        <end position="122"/>
    </location>
</feature>
<feature type="transmembrane region" description="Helical" evidence="3">
    <location>
        <begin position="151"/>
        <end position="171"/>
    </location>
</feature>
<feature type="transmembrane region" description="Helical" evidence="3">
    <location>
        <begin position="225"/>
        <end position="245"/>
    </location>
</feature>
<feature type="transmembrane region" description="Helical" evidence="3">
    <location>
        <begin position="262"/>
        <end position="282"/>
    </location>
</feature>
<feature type="transmembrane region" description="Helical" evidence="3">
    <location>
        <begin position="300"/>
        <end position="320"/>
    </location>
</feature>
<feature type="region of interest" description="Disordered" evidence="4">
    <location>
        <begin position="352"/>
        <end position="375"/>
    </location>
</feature>
<feature type="sequence conflict" description="In Ref. 2; AA sequence." evidence="5" ref="2">
    <original>R</original>
    <variation>K</variation>
    <location>
        <position position="339"/>
    </location>
</feature>
<keyword id="KW-0148">Chlorophyll</keyword>
<keyword id="KW-0157">Chromophore</keyword>
<keyword id="KW-0903">Direct protein sequencing</keyword>
<keyword id="KW-0472">Membrane</keyword>
<keyword id="KW-0602">Photosynthesis</keyword>
<keyword id="KW-0603">Photosystem I</keyword>
<keyword id="KW-0604">Photosystem II</keyword>
<keyword id="KW-0793">Thylakoid</keyword>
<keyword id="KW-0812">Transmembrane</keyword>
<keyword id="KW-1133">Transmembrane helix</keyword>
<gene>
    <name type="primary">pcbC</name>
</gene>
<name>PCBC_PROHO</name>
<dbReference type="EMBL" id="X97043">
    <property type="protein sequence ID" value="CAA65756.1"/>
    <property type="molecule type" value="Genomic_DNA"/>
</dbReference>
<dbReference type="SMR" id="P95505"/>
<dbReference type="GO" id="GO:0009522">
    <property type="term" value="C:photosystem I"/>
    <property type="evidence" value="ECO:0007669"/>
    <property type="project" value="UniProtKB-KW"/>
</dbReference>
<dbReference type="GO" id="GO:0009523">
    <property type="term" value="C:photosystem II"/>
    <property type="evidence" value="ECO:0007669"/>
    <property type="project" value="UniProtKB-KW"/>
</dbReference>
<dbReference type="GO" id="GO:0031676">
    <property type="term" value="C:plasma membrane-derived thylakoid membrane"/>
    <property type="evidence" value="ECO:0007669"/>
    <property type="project" value="UniProtKB-SubCell"/>
</dbReference>
<dbReference type="GO" id="GO:0016168">
    <property type="term" value="F:chlorophyll binding"/>
    <property type="evidence" value="ECO:0007669"/>
    <property type="project" value="UniProtKB-KW"/>
</dbReference>
<dbReference type="GO" id="GO:0009767">
    <property type="term" value="P:photosynthetic electron transport chain"/>
    <property type="evidence" value="ECO:0007669"/>
    <property type="project" value="InterPro"/>
</dbReference>
<dbReference type="InterPro" id="IPR000932">
    <property type="entry name" value="PS_antenna-like"/>
</dbReference>
<dbReference type="InterPro" id="IPR036001">
    <property type="entry name" value="PS_II_antenna-like_sf"/>
</dbReference>
<dbReference type="Pfam" id="PF00421">
    <property type="entry name" value="PSII"/>
    <property type="match status" value="1"/>
</dbReference>
<dbReference type="SUPFAM" id="SSF161077">
    <property type="entry name" value="Photosystem II antenna protein-like"/>
    <property type="match status" value="1"/>
</dbReference>
<organism>
    <name type="scientific">Prochlorothrix hollandica</name>
    <dbReference type="NCBI Taxonomy" id="1223"/>
    <lineage>
        <taxon>Bacteria</taxon>
        <taxon>Bacillati</taxon>
        <taxon>Cyanobacteriota</taxon>
        <taxon>Cyanophyceae</taxon>
        <taxon>Prochlorotrichales</taxon>
        <taxon>Prochlorotrichaceae</taxon>
        <taxon>Prochlorothrix</taxon>
    </lineage>
</organism>
<accession>P95505</accession>
<reference key="1">
    <citation type="journal article" date="1996" name="Proc. Natl. Acad. Sci. U.S.A.">
        <title>Independent evolution of the prochlorophyte and green plant chlorophyll a/b light-harvesting proteins.</title>
        <authorList>
            <person name="La Roche J."/>
            <person name="van der Staay G.W.M."/>
            <person name="Partensky F."/>
            <person name="Ducret A."/>
            <person name="Aebersold R.R."/>
            <person name="Li R."/>
            <person name="Golden S.S."/>
            <person name="Hiller R.G."/>
            <person name="Wrench P.M."/>
            <person name="Larkum A.W.D."/>
            <person name="Green B.R."/>
        </authorList>
    </citation>
    <scope>NUCLEOTIDE SEQUENCE [GENOMIC DNA]</scope>
</reference>
<reference key="2">
    <citation type="journal article" date="1998" name="Plant Mol. Biol.">
        <title>The 38 kDa chlorophyll a/b protein of the prokaryote Prochlorothrix hollandica is encoded by a divergent pcb gene.</title>
        <authorList>
            <person name="van der Staay G.W.M."/>
            <person name="Yurkova N."/>
            <person name="Green B.R."/>
        </authorList>
    </citation>
    <scope>NUCLEOTIDE SEQUENCE [GENOMIC DNA]</scope>
    <scope>PROTEIN SEQUENCE OF 127-139 AND 325-339</scope>
</reference>
<reference key="3">
    <citation type="book" date="1995" name="Photosynthesis from light to biosphere">
        <title>The Chl a/b antenna from prochlorophytes is related to the iron stress-induced Chl a antenna from cyanobacteria.</title>
        <editorList>
            <person name="Mathis P."/>
        </editorList>
        <authorList>
            <person name="van der Staay G.W.M."/>
            <person name="Ducret A."/>
            <person name="Aebersold R.R."/>
            <person name="Li R."/>
            <person name="Golden S.S."/>
            <person name="Hiller R.G."/>
            <person name="Wrench P.M."/>
            <person name="Larkum A.W.D."/>
            <person name="Green B.R."/>
        </authorList>
    </citation>
    <scope>NUCLEOTIDE SEQUENCE [GENOMIC DNA]</scope>
</reference>
<sequence length="375" mass="40112">MEECSCDNRFRRGNNEPAGFSLDEQWWAGNIRLVDLSGQLLGAHIAHAGLIAFWAGSITVLEVARYVPDVPFYEQGLGLLPHLATLGFGIGPDGTVVDTYPYFVIGILHLVTSAVLGAGGLFHTFKGPAILAEGGALAPKFHYDWGDTKQLSLILGHHLLLLGILCLAFVAKAMFWGGVYDASLGTVHTVSPNLNPADIFGYVFGFNHGQFNGLGMSSVDNLPDIIGGHVYIGILELIGGTWHILTKPFAIGAKPFSFSGEAILSYSLGAVGWMGLLSGFFVRYCDAAYPPQFYGPERSGAAAVQYILGVLLLVGHVWHATRARAGGEPVPYTPPAPQRGRFGMTRVAPAPARTFIGRGKPQPEPPKKKGLFGRG</sequence>
<protein>
    <recommendedName>
        <fullName>Chlorophyll a/b light-harvesting protein PcbC</fullName>
    </recommendedName>
</protein>